<name>FABZ_SHELP</name>
<reference key="1">
    <citation type="submission" date="2007-03" db="EMBL/GenBank/DDBJ databases">
        <title>Complete sequence of Shewanella loihica PV-4.</title>
        <authorList>
            <consortium name="US DOE Joint Genome Institute"/>
            <person name="Copeland A."/>
            <person name="Lucas S."/>
            <person name="Lapidus A."/>
            <person name="Barry K."/>
            <person name="Detter J.C."/>
            <person name="Glavina del Rio T."/>
            <person name="Hammon N."/>
            <person name="Israni S."/>
            <person name="Dalin E."/>
            <person name="Tice H."/>
            <person name="Pitluck S."/>
            <person name="Chain P."/>
            <person name="Malfatti S."/>
            <person name="Shin M."/>
            <person name="Vergez L."/>
            <person name="Schmutz J."/>
            <person name="Larimer F."/>
            <person name="Land M."/>
            <person name="Hauser L."/>
            <person name="Kyrpides N."/>
            <person name="Mikhailova N."/>
            <person name="Romine M.F."/>
            <person name="Serres G."/>
            <person name="Fredrickson J."/>
            <person name="Tiedje J."/>
            <person name="Richardson P."/>
        </authorList>
    </citation>
    <scope>NUCLEOTIDE SEQUENCE [LARGE SCALE GENOMIC DNA]</scope>
    <source>
        <strain>ATCC BAA-1088 / PV-4</strain>
    </source>
</reference>
<feature type="chain" id="PRO_0000301926" description="3-hydroxyacyl-[acyl-carrier-protein] dehydratase FabZ">
    <location>
        <begin position="1"/>
        <end position="153"/>
    </location>
</feature>
<feature type="active site" evidence="1">
    <location>
        <position position="54"/>
    </location>
</feature>
<keyword id="KW-0963">Cytoplasm</keyword>
<keyword id="KW-0441">Lipid A biosynthesis</keyword>
<keyword id="KW-0444">Lipid biosynthesis</keyword>
<keyword id="KW-0443">Lipid metabolism</keyword>
<keyword id="KW-0456">Lyase</keyword>
<keyword id="KW-1185">Reference proteome</keyword>
<dbReference type="EC" id="4.2.1.59" evidence="1"/>
<dbReference type="EMBL" id="CP000606">
    <property type="protein sequence ID" value="ABO24490.1"/>
    <property type="molecule type" value="Genomic_DNA"/>
</dbReference>
<dbReference type="RefSeq" id="WP_011866421.1">
    <property type="nucleotide sequence ID" value="NC_009092.1"/>
</dbReference>
<dbReference type="SMR" id="A3QG92"/>
<dbReference type="STRING" id="323850.Shew_2624"/>
<dbReference type="KEGG" id="slo:Shew_2624"/>
<dbReference type="eggNOG" id="COG0764">
    <property type="taxonomic scope" value="Bacteria"/>
</dbReference>
<dbReference type="HOGENOM" id="CLU_078912_1_0_6"/>
<dbReference type="OrthoDB" id="9772788at2"/>
<dbReference type="Proteomes" id="UP000001558">
    <property type="component" value="Chromosome"/>
</dbReference>
<dbReference type="GO" id="GO:0005737">
    <property type="term" value="C:cytoplasm"/>
    <property type="evidence" value="ECO:0007669"/>
    <property type="project" value="UniProtKB-SubCell"/>
</dbReference>
<dbReference type="GO" id="GO:0016020">
    <property type="term" value="C:membrane"/>
    <property type="evidence" value="ECO:0007669"/>
    <property type="project" value="GOC"/>
</dbReference>
<dbReference type="GO" id="GO:0019171">
    <property type="term" value="F:(3R)-hydroxyacyl-[acyl-carrier-protein] dehydratase activity"/>
    <property type="evidence" value="ECO:0007669"/>
    <property type="project" value="UniProtKB-EC"/>
</dbReference>
<dbReference type="GO" id="GO:0006633">
    <property type="term" value="P:fatty acid biosynthetic process"/>
    <property type="evidence" value="ECO:0007669"/>
    <property type="project" value="UniProtKB-UniRule"/>
</dbReference>
<dbReference type="GO" id="GO:0009245">
    <property type="term" value="P:lipid A biosynthetic process"/>
    <property type="evidence" value="ECO:0007669"/>
    <property type="project" value="UniProtKB-UniRule"/>
</dbReference>
<dbReference type="CDD" id="cd01288">
    <property type="entry name" value="FabZ"/>
    <property type="match status" value="1"/>
</dbReference>
<dbReference type="FunFam" id="3.10.129.10:FF:000001">
    <property type="entry name" value="3-hydroxyacyl-[acyl-carrier-protein] dehydratase FabZ"/>
    <property type="match status" value="1"/>
</dbReference>
<dbReference type="Gene3D" id="3.10.129.10">
    <property type="entry name" value="Hotdog Thioesterase"/>
    <property type="match status" value="1"/>
</dbReference>
<dbReference type="HAMAP" id="MF_00406">
    <property type="entry name" value="FabZ"/>
    <property type="match status" value="1"/>
</dbReference>
<dbReference type="InterPro" id="IPR013114">
    <property type="entry name" value="FabA_FabZ"/>
</dbReference>
<dbReference type="InterPro" id="IPR010084">
    <property type="entry name" value="FabZ"/>
</dbReference>
<dbReference type="InterPro" id="IPR029069">
    <property type="entry name" value="HotDog_dom_sf"/>
</dbReference>
<dbReference type="NCBIfam" id="TIGR01750">
    <property type="entry name" value="fabZ"/>
    <property type="match status" value="1"/>
</dbReference>
<dbReference type="NCBIfam" id="NF000582">
    <property type="entry name" value="PRK00006.1"/>
    <property type="match status" value="1"/>
</dbReference>
<dbReference type="PANTHER" id="PTHR30272">
    <property type="entry name" value="3-HYDROXYACYL-[ACYL-CARRIER-PROTEIN] DEHYDRATASE"/>
    <property type="match status" value="1"/>
</dbReference>
<dbReference type="PANTHER" id="PTHR30272:SF1">
    <property type="entry name" value="3-HYDROXYACYL-[ACYL-CARRIER-PROTEIN] DEHYDRATASE"/>
    <property type="match status" value="1"/>
</dbReference>
<dbReference type="Pfam" id="PF07977">
    <property type="entry name" value="FabA"/>
    <property type="match status" value="1"/>
</dbReference>
<dbReference type="SUPFAM" id="SSF54637">
    <property type="entry name" value="Thioesterase/thiol ester dehydrase-isomerase"/>
    <property type="match status" value="1"/>
</dbReference>
<comment type="function">
    <text evidence="1">Involved in unsaturated fatty acids biosynthesis. Catalyzes the dehydration of short chain beta-hydroxyacyl-ACPs and long chain saturated and unsaturated beta-hydroxyacyl-ACPs.</text>
</comment>
<comment type="catalytic activity">
    <reaction evidence="1">
        <text>a (3R)-hydroxyacyl-[ACP] = a (2E)-enoyl-[ACP] + H2O</text>
        <dbReference type="Rhea" id="RHEA:13097"/>
        <dbReference type="Rhea" id="RHEA-COMP:9925"/>
        <dbReference type="Rhea" id="RHEA-COMP:9945"/>
        <dbReference type="ChEBI" id="CHEBI:15377"/>
        <dbReference type="ChEBI" id="CHEBI:78784"/>
        <dbReference type="ChEBI" id="CHEBI:78827"/>
        <dbReference type="EC" id="4.2.1.59"/>
    </reaction>
</comment>
<comment type="subcellular location">
    <subcellularLocation>
        <location evidence="1">Cytoplasm</location>
    </subcellularLocation>
</comment>
<comment type="similarity">
    <text evidence="1">Belongs to the thioester dehydratase family. FabZ subfamily.</text>
</comment>
<accession>A3QG92</accession>
<gene>
    <name evidence="1" type="primary">fabZ</name>
    <name type="ordered locus">Shew_2624</name>
</gene>
<sequence>MSNQLNTMDIKEILKFLPHRYPFLLIDRVLDFTPGETLHAIKNVTINEPFFQGHFPVAPVMPGVLILEAMAQATGLLAFKTMSDEPSNDALYYFAGIDNARFKRVVEPGDQLHFEVKMIKERRGIGVFTGEAKVDGELVCSAEIMCARREIAK</sequence>
<evidence type="ECO:0000255" key="1">
    <source>
        <dbReference type="HAMAP-Rule" id="MF_00406"/>
    </source>
</evidence>
<proteinExistence type="inferred from homology"/>
<organism>
    <name type="scientific">Shewanella loihica (strain ATCC BAA-1088 / PV-4)</name>
    <dbReference type="NCBI Taxonomy" id="323850"/>
    <lineage>
        <taxon>Bacteria</taxon>
        <taxon>Pseudomonadati</taxon>
        <taxon>Pseudomonadota</taxon>
        <taxon>Gammaproteobacteria</taxon>
        <taxon>Alteromonadales</taxon>
        <taxon>Shewanellaceae</taxon>
        <taxon>Shewanella</taxon>
    </lineage>
</organism>
<protein>
    <recommendedName>
        <fullName evidence="1">3-hydroxyacyl-[acyl-carrier-protein] dehydratase FabZ</fullName>
        <ecNumber evidence="1">4.2.1.59</ecNumber>
    </recommendedName>
    <alternativeName>
        <fullName evidence="1">(3R)-hydroxymyristoyl-[acyl-carrier-protein] dehydratase</fullName>
        <shortName evidence="1">(3R)-hydroxymyristoyl-ACP dehydrase</shortName>
    </alternativeName>
    <alternativeName>
        <fullName evidence="1">Beta-hydroxyacyl-ACP dehydratase</fullName>
    </alternativeName>
</protein>